<evidence type="ECO:0000255" key="1">
    <source>
        <dbReference type="HAMAP-Rule" id="MF_01909"/>
    </source>
</evidence>
<evidence type="ECO:0000305" key="2"/>
<organism>
    <name type="scientific">Methanococcus maripaludis (strain C7 / ATCC BAA-1331)</name>
    <dbReference type="NCBI Taxonomy" id="426368"/>
    <lineage>
        <taxon>Archaea</taxon>
        <taxon>Methanobacteriati</taxon>
        <taxon>Methanobacteriota</taxon>
        <taxon>Methanomada group</taxon>
        <taxon>Methanococci</taxon>
        <taxon>Methanococcales</taxon>
        <taxon>Methanococcaceae</taxon>
        <taxon>Methanococcus</taxon>
    </lineage>
</organism>
<proteinExistence type="inferred from homology"/>
<sequence length="175" mass="20841">MLENPLIQQVLFEIMDEDVVGFDVLSVLINTNEVTDDEISRQLDVKLNNIRRILYKLYEARLVDYNREKDEETNWYTYTWKPSLEKVPALVAKKMKNVLKDLKEQLELEETNMFFFCSDCEIKFTFEDAMDSGFRCPQCGGMMYEYDNKKDISILKEQINYLEDEFNKNPLFSAY</sequence>
<protein>
    <recommendedName>
        <fullName evidence="1">Transcription factor E</fullName>
        <shortName evidence="1">TFE</shortName>
    </recommendedName>
    <alternativeName>
        <fullName evidence="1">TFIIE subunit alpha homolog</fullName>
    </alternativeName>
    <alternativeName>
        <fullName evidence="1">Transcription initiation factor TFIIE</fullName>
    </alternativeName>
</protein>
<keyword id="KW-0238">DNA-binding</keyword>
<keyword id="KW-0804">Transcription</keyword>
<keyword id="KW-0805">Transcription regulation</keyword>
<reference key="1">
    <citation type="submission" date="2007-06" db="EMBL/GenBank/DDBJ databases">
        <title>Complete sequence of Methanococcus maripaludis C7.</title>
        <authorList>
            <consortium name="US DOE Joint Genome Institute"/>
            <person name="Copeland A."/>
            <person name="Lucas S."/>
            <person name="Lapidus A."/>
            <person name="Barry K."/>
            <person name="Glavina del Rio T."/>
            <person name="Dalin E."/>
            <person name="Tice H."/>
            <person name="Pitluck S."/>
            <person name="Clum A."/>
            <person name="Schmutz J."/>
            <person name="Larimer F."/>
            <person name="Land M."/>
            <person name="Hauser L."/>
            <person name="Kyrpides N."/>
            <person name="Anderson I."/>
            <person name="Sieprawska-Lupa M."/>
            <person name="Whitman W.B."/>
            <person name="Richardson P."/>
        </authorList>
    </citation>
    <scope>NUCLEOTIDE SEQUENCE [LARGE SCALE GENOMIC DNA]</scope>
    <source>
        <strain>C7 / ATCC BAA-1331</strain>
    </source>
</reference>
<name>TFE_METM7</name>
<feature type="chain" id="PRO_0000326601" description="Transcription factor E">
    <location>
        <begin position="1"/>
        <end position="175"/>
    </location>
</feature>
<feature type="domain" description="HTH TFE/IIEalpha-type" evidence="1">
    <location>
        <begin position="3"/>
        <end position="88"/>
    </location>
</feature>
<accession>A6VI24</accession>
<gene>
    <name evidence="1" type="primary">tfe</name>
    <name type="ordered locus">MmarC7_1033</name>
</gene>
<comment type="function">
    <text evidence="1">Transcription factor that plays a role in the activation of archaeal genes transcribed by RNA polymerase. Facilitates transcription initiation by enhancing TATA-box recognition by TATA-box-binding protein (Tbp), and transcription factor B (Tfb) and RNA polymerase recruitment. Not absolutely required for transcription in vitro, but particularly important in cases where Tbp or Tfb function is not optimal. It dynamically alters the nucleic acid-binding properties of RNA polymerases by stabilizing the initiation complex and destabilizing elongation complexes. Seems to translocate with the RNA polymerase following initiation and acts by binding to the non template strand of the transcription bubble in elongation complexes.</text>
</comment>
<comment type="subunit">
    <text evidence="1">Monomer. Interaction with RNA polymerase subunits RpoF and RpoE is necessary for Tfe stimulatory transcription activity. Able to interact with Tbp and RNA polymerase in the absence of DNA promoter. Interacts both with the preinitiation and elongation complexes.</text>
</comment>
<comment type="domain">
    <text evidence="1">The winged helix domain is involved in binding to DNA in the preinitiation complex.</text>
</comment>
<comment type="similarity">
    <text evidence="1">Belongs to the TFE family.</text>
</comment>
<comment type="sequence caution" evidence="2">
    <conflict type="erroneous initiation">
        <sequence resource="EMBL-CDS" id="ABR66100"/>
    </conflict>
</comment>
<dbReference type="EMBL" id="CP000745">
    <property type="protein sequence ID" value="ABR66100.1"/>
    <property type="status" value="ALT_INIT"/>
    <property type="molecule type" value="Genomic_DNA"/>
</dbReference>
<dbReference type="SMR" id="A6VI24"/>
<dbReference type="STRING" id="426368.MmarC7_1033"/>
<dbReference type="KEGG" id="mmz:MmarC7_1033"/>
<dbReference type="eggNOG" id="arCOG04270">
    <property type="taxonomic scope" value="Archaea"/>
</dbReference>
<dbReference type="HOGENOM" id="CLU_100097_0_0_2"/>
<dbReference type="GO" id="GO:0003677">
    <property type="term" value="F:DNA binding"/>
    <property type="evidence" value="ECO:0007669"/>
    <property type="project" value="UniProtKB-KW"/>
</dbReference>
<dbReference type="GO" id="GO:0006355">
    <property type="term" value="P:regulation of DNA-templated transcription"/>
    <property type="evidence" value="ECO:0007669"/>
    <property type="project" value="InterPro"/>
</dbReference>
<dbReference type="GO" id="GO:0006367">
    <property type="term" value="P:transcription initiation at RNA polymerase II promoter"/>
    <property type="evidence" value="ECO:0007669"/>
    <property type="project" value="InterPro"/>
</dbReference>
<dbReference type="Gene3D" id="1.10.10.10">
    <property type="entry name" value="Winged helix-like DNA-binding domain superfamily/Winged helix DNA-binding domain"/>
    <property type="match status" value="1"/>
</dbReference>
<dbReference type="HAMAP" id="MF_01909">
    <property type="entry name" value="TFE_arch"/>
    <property type="match status" value="1"/>
</dbReference>
<dbReference type="InterPro" id="IPR016481">
    <property type="entry name" value="TF_E_archaea"/>
</dbReference>
<dbReference type="InterPro" id="IPR039997">
    <property type="entry name" value="TFE"/>
</dbReference>
<dbReference type="InterPro" id="IPR017919">
    <property type="entry name" value="TFIIE/TFIIEa_HTH"/>
</dbReference>
<dbReference type="InterPro" id="IPR002853">
    <property type="entry name" value="TFIIE_asu"/>
</dbReference>
<dbReference type="InterPro" id="IPR024550">
    <property type="entry name" value="TFIIEa/SarR/Rpc3_HTH_dom"/>
</dbReference>
<dbReference type="InterPro" id="IPR036388">
    <property type="entry name" value="WH-like_DNA-bd_sf"/>
</dbReference>
<dbReference type="InterPro" id="IPR036390">
    <property type="entry name" value="WH_DNA-bd_sf"/>
</dbReference>
<dbReference type="NCBIfam" id="NF004910">
    <property type="entry name" value="PRK06266.1"/>
    <property type="match status" value="1"/>
</dbReference>
<dbReference type="NCBIfam" id="TIGR00373">
    <property type="entry name" value="transcription factor E"/>
    <property type="match status" value="1"/>
</dbReference>
<dbReference type="PANTHER" id="PTHR13097:SF7">
    <property type="entry name" value="GENERAL TRANSCRIPTION FACTOR IIE SUBUNIT 1"/>
    <property type="match status" value="1"/>
</dbReference>
<dbReference type="PANTHER" id="PTHR13097">
    <property type="entry name" value="TRANSCRIPTION INITIATION FACTOR IIE, ALPHA SUBUNIT"/>
    <property type="match status" value="1"/>
</dbReference>
<dbReference type="Pfam" id="PF02002">
    <property type="entry name" value="TFIIE_alpha"/>
    <property type="match status" value="1"/>
</dbReference>
<dbReference type="PIRSF" id="PIRSF006373">
    <property type="entry name" value="TF_E_archaea"/>
    <property type="match status" value="1"/>
</dbReference>
<dbReference type="SMART" id="SM00531">
    <property type="entry name" value="TFIIE"/>
    <property type="match status" value="1"/>
</dbReference>
<dbReference type="SUPFAM" id="SSF46785">
    <property type="entry name" value="Winged helix' DNA-binding domain"/>
    <property type="match status" value="1"/>
</dbReference>
<dbReference type="PROSITE" id="PS51344">
    <property type="entry name" value="HTH_TFE_IIE"/>
    <property type="match status" value="1"/>
</dbReference>